<proteinExistence type="evidence at protein level"/>
<keyword id="KW-1015">Disulfide bond</keyword>
<keyword id="KW-0325">Glycoprotein</keyword>
<keyword id="KW-0348">Hemagglutinin</keyword>
<keyword id="KW-1032">Host cell membrane</keyword>
<keyword id="KW-1043">Host membrane</keyword>
<keyword id="KW-0945">Host-virus interaction</keyword>
<keyword id="KW-0378">Hydrolase</keyword>
<keyword id="KW-0472">Membrane</keyword>
<keyword id="KW-0735">Signal-anchor</keyword>
<keyword id="KW-0812">Transmembrane</keyword>
<keyword id="KW-1133">Transmembrane helix</keyword>
<keyword id="KW-1161">Viral attachment to host cell</keyword>
<keyword id="KW-0261">Viral envelope protein</keyword>
<keyword id="KW-0946">Virion</keyword>
<keyword id="KW-1160">Virus entry into host cell</keyword>
<evidence type="ECO:0000250" key="1">
    <source>
        <dbReference type="UniProtKB" id="P04853"/>
    </source>
</evidence>
<evidence type="ECO:0000250" key="2">
    <source>
        <dbReference type="UniProtKB" id="Q786F2"/>
    </source>
</evidence>
<evidence type="ECO:0000250" key="3">
    <source>
        <dbReference type="UniProtKB" id="Q91UL0"/>
    </source>
</evidence>
<evidence type="ECO:0000250" key="4">
    <source>
        <dbReference type="UniProtKB" id="Q9WAF5"/>
    </source>
</evidence>
<evidence type="ECO:0000255" key="5"/>
<evidence type="ECO:0000305" key="6"/>
<evidence type="ECO:0000305" key="7">
    <source>
    </source>
</evidence>
<name>HN_MUMPJ</name>
<organismHost>
    <name type="scientific">Homo sapiens</name>
    <name type="common">Human</name>
    <dbReference type="NCBI Taxonomy" id="9606"/>
</organismHost>
<comment type="function">
    <text evidence="2 4">Attaches the virus to alpha-2,3-linked sialic acid-containing cell receptors and thereby initiating infection (By similarity). Binding of HN protein to the receptor induces a conformational change that allows the F protein to trigger virion/cell membranes fusion (By similarity). Binds to the glycan motifs sialyl Lewis (SLe) and GM2 ganglioside (GM2-glycan) (By similarity).</text>
</comment>
<comment type="function">
    <text evidence="3">Neuraminidase activity ensures the efficient spread of the virus by dissociating the mature virions from the neuraminic acid containing glycoproteins.</text>
</comment>
<comment type="catalytic activity">
    <reaction evidence="4">
        <text>Hydrolysis of alpha-(2-&gt;3)-, alpha-(2-&gt;6)-, alpha-(2-&gt;8)- glycosidic linkages of terminal sialic acid residues in oligosaccharides, glycoproteins, glycolipids, colominic acid and synthetic substrates.</text>
        <dbReference type="EC" id="3.2.1.18"/>
    </reaction>
</comment>
<comment type="subunit">
    <text evidence="1 4">Homodimer. Further forms homotetramer (dimer of dimers) (By similarity). Interacts with F protein trimer (By similarity).</text>
</comment>
<comment type="subcellular location">
    <subcellularLocation>
        <location evidence="7">Virion membrane</location>
        <topology evidence="4">Single-pass type II membrane protein</topology>
    </subcellularLocation>
    <subcellularLocation>
        <location evidence="4">Host cell membrane</location>
        <topology evidence="4">Single-pass type II membrane protein</topology>
    </subcellularLocation>
</comment>
<comment type="domain">
    <text evidence="4">The C-terminus (head domain) is involved in binding the cellular receptor.</text>
</comment>
<comment type="similarity">
    <text evidence="6">Belongs to the paramyxoviruses hemagglutinin-neuraminidase family.</text>
</comment>
<protein>
    <recommendedName>
        <fullName>Hemagglutinin-neuraminidase</fullName>
        <ecNumber evidence="4">3.2.1.18</ecNumber>
    </recommendedName>
</protein>
<gene>
    <name type="primary">HN</name>
</gene>
<sequence length="582" mass="64091">MEPSKLFIMSDNATFAPGPVVNAAGKKTFRTCFRILVLSVQAVTLILVIVTLGELIRMINDQGLSNQLSSITDKIRESAAMIASAVGVMNQVIHGVTVSLPLQIEGNQNQLLSTLATICTNRNQVSNCSTNIPLVNDLRFINGINKFIIEDYATHDFSIGHPLNMPSFIPTATSPNGCTRIPSFSLGKTHWCYTHNVINANCKDHTSSNQYVSMGILVQTASGYPMFKTLKIQYLSDGLNRKSCSIATVPDGCAMYCYVSTQLETDDYAGSSPPTQKLTLLFYNDTIKERTISPSGLEGNWATLVPGVGSGIYFENKLIFPAYGGVLPNSTLGVKSAREFFRPVNPYNPCSGPPQELDQRALRSYFPSYFSSRRVQSAFLVCAWNQILVTNCELVVPSNNQTLMGAEGRVLLINNRLLYYQRSTSWWPYELLYEISFTFTNSGQSSVNMSWIPIYSFTRPGLGKCSGENICPTVCVSGVYLDPWPLTPYSHQSGINRNFYFTGALLNSSTTRVNPTLYVSALNNLKVLAPYGTQGLFASYTTTTCFQDTGDASVYCVYIMELASNIVGEFQILPVLARLTIT</sequence>
<reference key="1">
    <citation type="journal article" date="2002" name="Virology">
        <title>Sequence diversity of Jeryl Lynn strain of mumps virus: quantitative mutant analysis for vaccine quality control.</title>
        <authorList>
            <person name="Amexis G."/>
            <person name="Rubin S."/>
            <person name="Chizhikov V."/>
            <person name="Pelloquin F."/>
            <person name="Carbone K."/>
            <person name="Chumakov K."/>
        </authorList>
    </citation>
    <scope>NUCLEOTIDE SEQUENCE [GENOMIC RNA]</scope>
    <source>
        <strain>Jeryl-Lynn</strain>
    </source>
</reference>
<reference key="2">
    <citation type="journal article" date="2009" name="J. Gen. Virol.">
        <title>Molecular differences between two Jeryl Lynn mumps virus vaccine component strains, JL5 and JL2.</title>
        <authorList>
            <person name="Chambers P."/>
            <person name="Rima B.K."/>
            <person name="Duprex W.P."/>
        </authorList>
    </citation>
    <scope>NUCLEOTIDE SEQUENCE [GENOMIC RNA]</scope>
    <source>
        <strain>Jeryl-Lynn</strain>
    </source>
</reference>
<reference key="3">
    <citation type="journal article" date="2016" name="Virol. J.">
        <title>Identification of mumps virus protein and lipid composition by mass spectrometry.</title>
        <authorList>
            <person name="Brgles M."/>
            <person name="Bonta M."/>
            <person name="Santak M."/>
            <person name="Jagusic M."/>
            <person name="Forcic D."/>
            <person name="Halassy B."/>
            <person name="Allmaier G."/>
            <person name="Marchetti-Deschmann M."/>
        </authorList>
    </citation>
    <scope>IDENTIFICATION BY MASS SPECTROMETRY</scope>
    <scope>SUBCELLULAR LOCATION</scope>
    <source>
        <strain>Jeryl-Lynn 5</strain>
    </source>
</reference>
<accession>Q8QV65</accession>
<accession>C7C5S5</accession>
<feature type="chain" id="PRO_0000462015" description="Hemagglutinin-neuraminidase">
    <location>
        <begin position="1"/>
        <end position="582"/>
    </location>
</feature>
<feature type="transmembrane region" description="Helical" evidence="5">
    <location>
        <begin position="35"/>
        <end position="55"/>
    </location>
</feature>
<feature type="site" description="Binding to the glycan motifs of the host receptor" evidence="4">
    <location>
        <position position="180"/>
    </location>
</feature>
<feature type="site" description="Binding to the glycan motifs of the host receptor" evidence="4">
    <location>
        <position position="242"/>
    </location>
</feature>
<feature type="site" description="Binding to the glycan motifs of the host receptor" evidence="4">
    <location>
        <position position="264"/>
    </location>
</feature>
<feature type="site" description="Binding to the glycan motifs of the host receptor" evidence="4">
    <location>
        <position position="323"/>
    </location>
</feature>
<feature type="site" description="Binding to the glycan motifs of the host receptor" evidence="4">
    <location>
        <position position="369"/>
    </location>
</feature>
<feature type="site" description="Binding to the glycan motifs of the host receptor" evidence="4">
    <location>
        <position position="407"/>
    </location>
</feature>
<feature type="site" description="Binding to the glycan motifs of the host receptor" evidence="4">
    <location>
        <position position="422"/>
    </location>
</feature>
<feature type="site" description="Binding to the glycan motifs of the host receptor" evidence="4">
    <location>
        <position position="512"/>
    </location>
</feature>
<feature type="site" description="Binding to the glycan motifs of the host receptor" evidence="4">
    <location>
        <position position="540"/>
    </location>
</feature>
<feature type="glycosylation site" description="N-linked (GlcNAc...) asparagine; by host" evidence="4">
    <location>
        <position position="284"/>
    </location>
</feature>
<feature type="glycosylation site" description="N-linked (GlcNAc...) asparagine; by host" evidence="4">
    <location>
        <position position="329"/>
    </location>
</feature>
<feature type="glycosylation site" description="N-linked (GlcNAc...) asparagine; by host" evidence="4">
    <location>
        <position position="400"/>
    </location>
</feature>
<feature type="glycosylation site" description="N-linked (GlcNAc...) asparagine; by host" evidence="4">
    <location>
        <position position="448"/>
    </location>
</feature>
<feature type="glycosylation site" description="N-linked (GlcNAc...) asparagine; by host" evidence="4">
    <location>
        <position position="507"/>
    </location>
</feature>
<feature type="disulfide bond" evidence="4">
    <location>
        <begin position="178"/>
        <end position="202"/>
    </location>
</feature>
<feature type="disulfide bond" evidence="4">
    <location>
        <begin position="192"/>
        <end position="253"/>
    </location>
</feature>
<feature type="disulfide bond" evidence="4">
    <location>
        <begin position="244"/>
        <end position="257"/>
    </location>
</feature>
<feature type="disulfide bond" evidence="4">
    <location>
        <begin position="350"/>
        <end position="471"/>
    </location>
</feature>
<feature type="disulfide bond" evidence="4">
    <location>
        <begin position="382"/>
        <end position="392"/>
    </location>
</feature>
<feature type="disulfide bond" evidence="4">
    <location>
        <begin position="465"/>
        <end position="475"/>
    </location>
</feature>
<feature type="disulfide bond" evidence="4">
    <location>
        <begin position="545"/>
        <end position="556"/>
    </location>
</feature>
<feature type="sequence conflict" description="In Ref. 2; CBA10124." evidence="6" ref="2">
    <original>H</original>
    <variation>R</variation>
    <location>
        <position position="205"/>
    </location>
</feature>
<feature type="sequence conflict" description="In Ref. 2; CBA10124." evidence="6" ref="2">
    <original>KCS</original>
    <variation>NCR</variation>
    <location>
        <begin position="464"/>
        <end position="466"/>
    </location>
</feature>
<dbReference type="EC" id="3.2.1.18" evidence="4"/>
<dbReference type="EMBL" id="AF345290">
    <property type="protein sequence ID" value="AAL83745.1"/>
    <property type="molecule type" value="Genomic_RNA"/>
</dbReference>
<dbReference type="EMBL" id="FN431985">
    <property type="protein sequence ID" value="CBA10124.1"/>
    <property type="molecule type" value="Genomic_RNA"/>
</dbReference>
<dbReference type="PIR" id="PQ0826">
    <property type="entry name" value="PQ0826"/>
</dbReference>
<dbReference type="SMR" id="Q8QV65"/>
<dbReference type="CAZy" id="GH83">
    <property type="family name" value="Glycoside Hydrolase Family 83"/>
</dbReference>
<dbReference type="GlyCosmos" id="Q8QV65">
    <property type="glycosylation" value="1 site, No reported glycans"/>
</dbReference>
<dbReference type="Proteomes" id="UP000180816">
    <property type="component" value="Genome"/>
</dbReference>
<dbReference type="Proteomes" id="UP000181034">
    <property type="component" value="Genome"/>
</dbReference>
<dbReference type="GO" id="GO:0020002">
    <property type="term" value="C:host cell plasma membrane"/>
    <property type="evidence" value="ECO:0007669"/>
    <property type="project" value="UniProtKB-KW"/>
</dbReference>
<dbReference type="GO" id="GO:0016020">
    <property type="term" value="C:membrane"/>
    <property type="evidence" value="ECO:0007669"/>
    <property type="project" value="UniProtKB-KW"/>
</dbReference>
<dbReference type="GO" id="GO:0019031">
    <property type="term" value="C:viral envelope"/>
    <property type="evidence" value="ECO:0007669"/>
    <property type="project" value="UniProtKB-KW"/>
</dbReference>
<dbReference type="GO" id="GO:0055036">
    <property type="term" value="C:virion membrane"/>
    <property type="evidence" value="ECO:0007669"/>
    <property type="project" value="UniProtKB-SubCell"/>
</dbReference>
<dbReference type="GO" id="GO:0004308">
    <property type="term" value="F:exo-alpha-sialidase activity"/>
    <property type="evidence" value="ECO:0007669"/>
    <property type="project" value="InterPro"/>
</dbReference>
<dbReference type="GO" id="GO:0046789">
    <property type="term" value="F:host cell surface receptor binding"/>
    <property type="evidence" value="ECO:0007669"/>
    <property type="project" value="InterPro"/>
</dbReference>
<dbReference type="GO" id="GO:0046718">
    <property type="term" value="P:symbiont entry into host cell"/>
    <property type="evidence" value="ECO:0007669"/>
    <property type="project" value="UniProtKB-KW"/>
</dbReference>
<dbReference type="GO" id="GO:0019062">
    <property type="term" value="P:virion attachment to host cell"/>
    <property type="evidence" value="ECO:0007669"/>
    <property type="project" value="UniProtKB-KW"/>
</dbReference>
<dbReference type="CDD" id="cd15469">
    <property type="entry name" value="HN"/>
    <property type="match status" value="1"/>
</dbReference>
<dbReference type="FunFam" id="2.120.10.10:FF:000004">
    <property type="entry name" value="Hemagglutinin-neuraminidase"/>
    <property type="match status" value="1"/>
</dbReference>
<dbReference type="Gene3D" id="1.20.5.110">
    <property type="match status" value="1"/>
</dbReference>
<dbReference type="Gene3D" id="2.120.10.10">
    <property type="match status" value="1"/>
</dbReference>
<dbReference type="InterPro" id="IPR016285">
    <property type="entry name" value="Hemagglutn-neuramid"/>
</dbReference>
<dbReference type="InterPro" id="IPR000665">
    <property type="entry name" value="Hemagglutn/HN"/>
</dbReference>
<dbReference type="InterPro" id="IPR036278">
    <property type="entry name" value="Sialidase_sf"/>
</dbReference>
<dbReference type="Pfam" id="PF00423">
    <property type="entry name" value="HN"/>
    <property type="match status" value="1"/>
</dbReference>
<dbReference type="PIRSF" id="PIRSF001072">
    <property type="entry name" value="Hemagglut-neuramid_paramyxoV"/>
    <property type="match status" value="1"/>
</dbReference>
<dbReference type="SUPFAM" id="SSF50939">
    <property type="entry name" value="Sialidases"/>
    <property type="match status" value="1"/>
</dbReference>
<organism>
    <name type="scientific">Mumps virus genotype A (strain Jeryl-Lynn)</name>
    <name type="common">MuV</name>
    <dbReference type="NCBI Taxonomy" id="11168"/>
    <lineage>
        <taxon>Viruses</taxon>
        <taxon>Riboviria</taxon>
        <taxon>Orthornavirae</taxon>
        <taxon>Negarnaviricota</taxon>
        <taxon>Haploviricotina</taxon>
        <taxon>Monjiviricetes</taxon>
        <taxon>Mononegavirales</taxon>
        <taxon>Paramyxoviridae</taxon>
        <taxon>Rubulavirinae</taxon>
        <taxon>Orthorubulavirus</taxon>
        <taxon>Orthorubulavirus parotitidis</taxon>
        <taxon>Mumps orthorubulavirus</taxon>
    </lineage>
</organism>